<reference key="1">
    <citation type="journal article" date="2003" name="Nature">
        <title>Genome sequence of Bacillus cereus and comparative analysis with Bacillus anthracis.</title>
        <authorList>
            <person name="Ivanova N."/>
            <person name="Sorokin A."/>
            <person name="Anderson I."/>
            <person name="Galleron N."/>
            <person name="Candelon B."/>
            <person name="Kapatral V."/>
            <person name="Bhattacharyya A."/>
            <person name="Reznik G."/>
            <person name="Mikhailova N."/>
            <person name="Lapidus A."/>
            <person name="Chu L."/>
            <person name="Mazur M."/>
            <person name="Goltsman E."/>
            <person name="Larsen N."/>
            <person name="D'Souza M."/>
            <person name="Walunas T."/>
            <person name="Grechkin Y."/>
            <person name="Pusch G."/>
            <person name="Haselkorn R."/>
            <person name="Fonstein M."/>
            <person name="Ehrlich S.D."/>
            <person name="Overbeek R."/>
            <person name="Kyrpides N.C."/>
        </authorList>
    </citation>
    <scope>NUCLEOTIDE SEQUENCE [LARGE SCALE GENOMIC DNA]</scope>
    <source>
        <strain>ATCC 14579 / DSM 31 / CCUG 7414 / JCM 2152 / NBRC 15305 / NCIMB 9373 / NCTC 2599 / NRRL B-3711</strain>
    </source>
</reference>
<comment type="function">
    <text evidence="1">Can catalyze the hydrolysis of ATP in the presence of single-stranded DNA, the ATP-dependent uptake of single-stranded DNA by duplex DNA, and the ATP-dependent hybridization of homologous single-stranded DNAs. It interacts with LexA causing its activation and leading to its autocatalytic cleavage.</text>
</comment>
<comment type="subcellular location">
    <subcellularLocation>
        <location evidence="1">Cytoplasm</location>
    </subcellularLocation>
</comment>
<comment type="similarity">
    <text evidence="1">Belongs to the RecA family.</text>
</comment>
<protein>
    <recommendedName>
        <fullName evidence="1">Protein RecA</fullName>
    </recommendedName>
    <alternativeName>
        <fullName evidence="1">Recombinase A</fullName>
    </alternativeName>
</protein>
<sequence>MSDRQAALDMALKQIEKQFGKGSIMKLGEQAERRVSTVSSGSLALDVALGVGGYPRGRIIEIYGPESSGKTTVSLHAIAEVQRQGGQAAFIDAEHAMDPVYAQKLGVNIDELLLSQPDTGEQGLEIAEALVRSGAVDIIVIDSVAALVPKAEIEGDMGDSHVGLQARLMSQALRKLSGAINKSKTIAIFINQIREKVGVMFGNPETTPGGRALKFYSTVRLEVRRAEQLKQGNDIVGNKTKVKVVKNKVAPPFRVAEVDIMYGEGISREGEILDMASELDIVQKSGAWYSYNEERLGQGRENSKQFLKENTDLREEIAFFIREHHGISEDSGAEGAEDSTLLD</sequence>
<evidence type="ECO:0000255" key="1">
    <source>
        <dbReference type="HAMAP-Rule" id="MF_00268"/>
    </source>
</evidence>
<organism>
    <name type="scientific">Bacillus cereus (strain ATCC 14579 / DSM 31 / CCUG 7414 / JCM 2152 / NBRC 15305 / NCIMB 9373 / NCTC 2599 / NRRL B-3711)</name>
    <dbReference type="NCBI Taxonomy" id="226900"/>
    <lineage>
        <taxon>Bacteria</taxon>
        <taxon>Bacillati</taxon>
        <taxon>Bacillota</taxon>
        <taxon>Bacilli</taxon>
        <taxon>Bacillales</taxon>
        <taxon>Bacillaceae</taxon>
        <taxon>Bacillus</taxon>
        <taxon>Bacillus cereus group</taxon>
    </lineage>
</organism>
<dbReference type="EMBL" id="AE016877">
    <property type="protein sequence ID" value="AAP10703.1"/>
    <property type="molecule type" value="Genomic_DNA"/>
</dbReference>
<dbReference type="RefSeq" id="NP_833502.1">
    <property type="nucleotide sequence ID" value="NC_004722.1"/>
</dbReference>
<dbReference type="RefSeq" id="WP_001283860.1">
    <property type="nucleotide sequence ID" value="NZ_CP138336.1"/>
</dbReference>
<dbReference type="SMR" id="Q81A16"/>
<dbReference type="STRING" id="226900.BC_3779"/>
<dbReference type="MetOSite" id="Q81A16"/>
<dbReference type="KEGG" id="bce:BC3779"/>
<dbReference type="PATRIC" id="fig|226900.8.peg.3895"/>
<dbReference type="HOGENOM" id="CLU_040469_1_2_9"/>
<dbReference type="OrthoDB" id="9776733at2"/>
<dbReference type="Proteomes" id="UP000001417">
    <property type="component" value="Chromosome"/>
</dbReference>
<dbReference type="GO" id="GO:0005737">
    <property type="term" value="C:cytoplasm"/>
    <property type="evidence" value="ECO:0007669"/>
    <property type="project" value="UniProtKB-SubCell"/>
</dbReference>
<dbReference type="GO" id="GO:0005524">
    <property type="term" value="F:ATP binding"/>
    <property type="evidence" value="ECO:0007669"/>
    <property type="project" value="UniProtKB-UniRule"/>
</dbReference>
<dbReference type="GO" id="GO:0016887">
    <property type="term" value="F:ATP hydrolysis activity"/>
    <property type="evidence" value="ECO:0007669"/>
    <property type="project" value="InterPro"/>
</dbReference>
<dbReference type="GO" id="GO:0140664">
    <property type="term" value="F:ATP-dependent DNA damage sensor activity"/>
    <property type="evidence" value="ECO:0007669"/>
    <property type="project" value="InterPro"/>
</dbReference>
<dbReference type="GO" id="GO:0003684">
    <property type="term" value="F:damaged DNA binding"/>
    <property type="evidence" value="ECO:0007669"/>
    <property type="project" value="UniProtKB-UniRule"/>
</dbReference>
<dbReference type="GO" id="GO:0003697">
    <property type="term" value="F:single-stranded DNA binding"/>
    <property type="evidence" value="ECO:0007669"/>
    <property type="project" value="UniProtKB-UniRule"/>
</dbReference>
<dbReference type="GO" id="GO:0006310">
    <property type="term" value="P:DNA recombination"/>
    <property type="evidence" value="ECO:0007669"/>
    <property type="project" value="UniProtKB-UniRule"/>
</dbReference>
<dbReference type="GO" id="GO:0006281">
    <property type="term" value="P:DNA repair"/>
    <property type="evidence" value="ECO:0007669"/>
    <property type="project" value="UniProtKB-UniRule"/>
</dbReference>
<dbReference type="GO" id="GO:0009432">
    <property type="term" value="P:SOS response"/>
    <property type="evidence" value="ECO:0007669"/>
    <property type="project" value="UniProtKB-UniRule"/>
</dbReference>
<dbReference type="CDD" id="cd00983">
    <property type="entry name" value="RecA"/>
    <property type="match status" value="1"/>
</dbReference>
<dbReference type="FunFam" id="3.40.50.300:FF:000087">
    <property type="entry name" value="Recombinase RecA"/>
    <property type="match status" value="1"/>
</dbReference>
<dbReference type="Gene3D" id="3.40.50.300">
    <property type="entry name" value="P-loop containing nucleotide triphosphate hydrolases"/>
    <property type="match status" value="1"/>
</dbReference>
<dbReference type="HAMAP" id="MF_00268">
    <property type="entry name" value="RecA"/>
    <property type="match status" value="1"/>
</dbReference>
<dbReference type="InterPro" id="IPR003593">
    <property type="entry name" value="AAA+_ATPase"/>
</dbReference>
<dbReference type="InterPro" id="IPR013765">
    <property type="entry name" value="DNA_recomb/repair_RecA"/>
</dbReference>
<dbReference type="InterPro" id="IPR020584">
    <property type="entry name" value="DNA_recomb/repair_RecA_CS"/>
</dbReference>
<dbReference type="InterPro" id="IPR027417">
    <property type="entry name" value="P-loop_NTPase"/>
</dbReference>
<dbReference type="InterPro" id="IPR049261">
    <property type="entry name" value="RecA-like_C"/>
</dbReference>
<dbReference type="InterPro" id="IPR049428">
    <property type="entry name" value="RecA-like_N"/>
</dbReference>
<dbReference type="InterPro" id="IPR020588">
    <property type="entry name" value="RecA_ATP-bd"/>
</dbReference>
<dbReference type="InterPro" id="IPR023400">
    <property type="entry name" value="RecA_C_sf"/>
</dbReference>
<dbReference type="InterPro" id="IPR020587">
    <property type="entry name" value="RecA_monomer-monomer_interface"/>
</dbReference>
<dbReference type="NCBIfam" id="TIGR02012">
    <property type="entry name" value="tigrfam_recA"/>
    <property type="match status" value="1"/>
</dbReference>
<dbReference type="PANTHER" id="PTHR45900:SF1">
    <property type="entry name" value="MITOCHONDRIAL DNA REPAIR PROTEIN RECA HOMOLOG-RELATED"/>
    <property type="match status" value="1"/>
</dbReference>
<dbReference type="PANTHER" id="PTHR45900">
    <property type="entry name" value="RECA"/>
    <property type="match status" value="1"/>
</dbReference>
<dbReference type="Pfam" id="PF00154">
    <property type="entry name" value="RecA"/>
    <property type="match status" value="1"/>
</dbReference>
<dbReference type="Pfam" id="PF21096">
    <property type="entry name" value="RecA_C"/>
    <property type="match status" value="1"/>
</dbReference>
<dbReference type="PRINTS" id="PR00142">
    <property type="entry name" value="RECA"/>
</dbReference>
<dbReference type="SMART" id="SM00382">
    <property type="entry name" value="AAA"/>
    <property type="match status" value="1"/>
</dbReference>
<dbReference type="SUPFAM" id="SSF52540">
    <property type="entry name" value="P-loop containing nucleoside triphosphate hydrolases"/>
    <property type="match status" value="1"/>
</dbReference>
<dbReference type="SUPFAM" id="SSF54752">
    <property type="entry name" value="RecA protein, C-terminal domain"/>
    <property type="match status" value="1"/>
</dbReference>
<dbReference type="PROSITE" id="PS00321">
    <property type="entry name" value="RECA_1"/>
    <property type="match status" value="1"/>
</dbReference>
<dbReference type="PROSITE" id="PS50162">
    <property type="entry name" value="RECA_2"/>
    <property type="match status" value="1"/>
</dbReference>
<dbReference type="PROSITE" id="PS50163">
    <property type="entry name" value="RECA_3"/>
    <property type="match status" value="1"/>
</dbReference>
<proteinExistence type="inferred from homology"/>
<name>RECA_BACCR</name>
<feature type="chain" id="PRO_0000122650" description="Protein RecA">
    <location>
        <begin position="1"/>
        <end position="343"/>
    </location>
</feature>
<feature type="binding site" evidence="1">
    <location>
        <begin position="64"/>
        <end position="71"/>
    </location>
    <ligand>
        <name>ATP</name>
        <dbReference type="ChEBI" id="CHEBI:30616"/>
    </ligand>
</feature>
<gene>
    <name evidence="1" type="primary">recA</name>
    <name type="ordered locus">BC_3779</name>
</gene>
<keyword id="KW-0067">ATP-binding</keyword>
<keyword id="KW-0963">Cytoplasm</keyword>
<keyword id="KW-0227">DNA damage</keyword>
<keyword id="KW-0233">DNA recombination</keyword>
<keyword id="KW-0234">DNA repair</keyword>
<keyword id="KW-0238">DNA-binding</keyword>
<keyword id="KW-0547">Nucleotide-binding</keyword>
<keyword id="KW-1185">Reference proteome</keyword>
<keyword id="KW-0742">SOS response</keyword>
<accession>Q81A16</accession>